<proteinExistence type="predicted"/>
<sequence length="371" mass="42389">MPPKQQPKADLAKKQKQVEDKTFGLKNKNKSKNVQKYVQSLKQSVQPKPDATKAAAKKKKEEEKAREQELNELFKVAISQPKVPVGVDPKSILCEFFKAGQCQKGFKCKFSHDLNIQRKGEKIDIYSDTRDEDGDMDEWDQETLEKVVESKKNEYNQNKPTDIVCKYFLDAVEKKQYGWFWSCPNGGKECHYRHALPPGYVLKSQMKALLEEESSKKLAVEDEIENERAKLQTATQMTPALFMEWKRKKIAERDAGLAASQAERAKNDRMSGRELFLSNASLFVDDAEACEEYEREREQEETEQKAKNKEAEAGTSKSSGDAEQSSKEVNEEEEDDDDDDDDLDMDELDELEASLSKTSIQIREPNDEGSS</sequence>
<name>C3H21_ARATH</name>
<organism>
    <name type="scientific">Arabidopsis thaliana</name>
    <name type="common">Mouse-ear cress</name>
    <dbReference type="NCBI Taxonomy" id="3702"/>
    <lineage>
        <taxon>Eukaryota</taxon>
        <taxon>Viridiplantae</taxon>
        <taxon>Streptophyta</taxon>
        <taxon>Embryophyta</taxon>
        <taxon>Tracheophyta</taxon>
        <taxon>Spermatophyta</taxon>
        <taxon>Magnoliopsida</taxon>
        <taxon>eudicotyledons</taxon>
        <taxon>Gunneridae</taxon>
        <taxon>Pentapetalae</taxon>
        <taxon>rosids</taxon>
        <taxon>malvids</taxon>
        <taxon>Brassicales</taxon>
        <taxon>Brassicaceae</taxon>
        <taxon>Camelineae</taxon>
        <taxon>Arabidopsis</taxon>
    </lineage>
</organism>
<feature type="chain" id="PRO_0000371980" description="Zinc finger CCCH domain-containing protein 21">
    <location>
        <begin position="1"/>
        <end position="371"/>
    </location>
</feature>
<feature type="zinc finger region" description="C3H1-type 1" evidence="2">
    <location>
        <begin position="88"/>
        <end position="115"/>
    </location>
</feature>
<feature type="zinc finger region" description="C3H1-type 2" evidence="2">
    <location>
        <begin position="159"/>
        <end position="197"/>
    </location>
</feature>
<feature type="region of interest" description="Disordered" evidence="3">
    <location>
        <begin position="1"/>
        <end position="64"/>
    </location>
</feature>
<feature type="region of interest" description="Disordered" evidence="3">
    <location>
        <begin position="290"/>
        <end position="371"/>
    </location>
</feature>
<feature type="coiled-coil region" evidence="1">
    <location>
        <begin position="205"/>
        <end position="237"/>
    </location>
</feature>
<feature type="coiled-coil region" evidence="1">
    <location>
        <begin position="283"/>
        <end position="317"/>
    </location>
</feature>
<feature type="compositionally biased region" description="Basic and acidic residues" evidence="3">
    <location>
        <begin position="10"/>
        <end position="23"/>
    </location>
</feature>
<feature type="compositionally biased region" description="Polar residues" evidence="3">
    <location>
        <begin position="34"/>
        <end position="46"/>
    </location>
</feature>
<feature type="compositionally biased region" description="Basic and acidic residues" evidence="3">
    <location>
        <begin position="292"/>
        <end position="312"/>
    </location>
</feature>
<feature type="compositionally biased region" description="Acidic residues" evidence="3">
    <location>
        <begin position="330"/>
        <end position="352"/>
    </location>
</feature>
<accession>Q9SK74</accession>
<gene>
    <name type="ordered locus">At2g20280</name>
    <name type="ORF">F11A3.17</name>
</gene>
<protein>
    <recommendedName>
        <fullName>Zinc finger CCCH domain-containing protein 21</fullName>
        <shortName>AtC3H21</shortName>
    </recommendedName>
</protein>
<dbReference type="EMBL" id="AC006569">
    <property type="protein sequence ID" value="AAD21760.1"/>
    <property type="molecule type" value="Genomic_DNA"/>
</dbReference>
<dbReference type="EMBL" id="CP002685">
    <property type="protein sequence ID" value="AEC06989.1"/>
    <property type="molecule type" value="Genomic_DNA"/>
</dbReference>
<dbReference type="PIR" id="C84587">
    <property type="entry name" value="C84587"/>
</dbReference>
<dbReference type="RefSeq" id="NP_179618.1">
    <property type="nucleotide sequence ID" value="NM_127587.3"/>
</dbReference>
<dbReference type="BioGRID" id="1900">
    <property type="interactions" value="1"/>
</dbReference>
<dbReference type="FunCoup" id="Q9SK74">
    <property type="interactions" value="5088"/>
</dbReference>
<dbReference type="STRING" id="3702.Q9SK74"/>
<dbReference type="iPTMnet" id="Q9SK74"/>
<dbReference type="PaxDb" id="3702-AT2G20280.1"/>
<dbReference type="ProteomicsDB" id="222823"/>
<dbReference type="EnsemblPlants" id="AT2G20280.1">
    <property type="protein sequence ID" value="AT2G20280.1"/>
    <property type="gene ID" value="AT2G20280"/>
</dbReference>
<dbReference type="GeneID" id="816547"/>
<dbReference type="Gramene" id="AT2G20280.1">
    <property type="protein sequence ID" value="AT2G20280.1"/>
    <property type="gene ID" value="AT2G20280"/>
</dbReference>
<dbReference type="KEGG" id="ath:AT2G20280"/>
<dbReference type="Araport" id="AT2G20280"/>
<dbReference type="TAIR" id="AT2G20280"/>
<dbReference type="eggNOG" id="KOG1763">
    <property type="taxonomic scope" value="Eukaryota"/>
</dbReference>
<dbReference type="HOGENOM" id="CLU_042870_0_1_1"/>
<dbReference type="InParanoid" id="Q9SK74"/>
<dbReference type="OMA" id="AMIFKPV"/>
<dbReference type="PhylomeDB" id="Q9SK74"/>
<dbReference type="CD-CODE" id="4299E36E">
    <property type="entry name" value="Nucleolus"/>
</dbReference>
<dbReference type="PRO" id="PR:Q9SK74"/>
<dbReference type="Proteomes" id="UP000006548">
    <property type="component" value="Chromosome 2"/>
</dbReference>
<dbReference type="ExpressionAtlas" id="Q9SK74">
    <property type="expression patterns" value="baseline and differential"/>
</dbReference>
<dbReference type="GO" id="GO:0005739">
    <property type="term" value="C:mitochondrion"/>
    <property type="evidence" value="ECO:0007005"/>
    <property type="project" value="TAIR"/>
</dbReference>
<dbReference type="GO" id="GO:0003677">
    <property type="term" value="F:DNA binding"/>
    <property type="evidence" value="ECO:0007669"/>
    <property type="project" value="UniProtKB-KW"/>
</dbReference>
<dbReference type="GO" id="GO:0008270">
    <property type="term" value="F:zinc ion binding"/>
    <property type="evidence" value="ECO:0007669"/>
    <property type="project" value="UniProtKB-KW"/>
</dbReference>
<dbReference type="Gene3D" id="6.20.400.10">
    <property type="match status" value="1"/>
</dbReference>
<dbReference type="Gene3D" id="4.10.1000.10">
    <property type="entry name" value="Zinc finger, CCCH-type"/>
    <property type="match status" value="1"/>
</dbReference>
<dbReference type="InterPro" id="IPR032378">
    <property type="entry name" value="ZC3H15/TMA46_C"/>
</dbReference>
<dbReference type="InterPro" id="IPR000571">
    <property type="entry name" value="Znf_CCCH"/>
</dbReference>
<dbReference type="InterPro" id="IPR036855">
    <property type="entry name" value="Znf_CCCH_sf"/>
</dbReference>
<dbReference type="PANTHER" id="PTHR12681:SF16">
    <property type="entry name" value="ZINC FINGER CCCH DOMAIN-CONTAINING PROTEIN 21"/>
    <property type="match status" value="1"/>
</dbReference>
<dbReference type="PANTHER" id="PTHR12681">
    <property type="entry name" value="ZINC FINGER-CONTAINING PROTEIN P48ZNF"/>
    <property type="match status" value="1"/>
</dbReference>
<dbReference type="Pfam" id="PF16543">
    <property type="entry name" value="DFRP_C"/>
    <property type="match status" value="1"/>
</dbReference>
<dbReference type="Pfam" id="PF00642">
    <property type="entry name" value="zf-CCCH"/>
    <property type="match status" value="1"/>
</dbReference>
<dbReference type="SMART" id="SM00356">
    <property type="entry name" value="ZnF_C3H1"/>
    <property type="match status" value="2"/>
</dbReference>
<dbReference type="SUPFAM" id="SSF90229">
    <property type="entry name" value="CCCH zinc finger"/>
    <property type="match status" value="1"/>
</dbReference>
<dbReference type="PROSITE" id="PS50103">
    <property type="entry name" value="ZF_C3H1"/>
    <property type="match status" value="2"/>
</dbReference>
<keyword id="KW-0175">Coiled coil</keyword>
<keyword id="KW-0238">DNA-binding</keyword>
<keyword id="KW-0479">Metal-binding</keyword>
<keyword id="KW-1185">Reference proteome</keyword>
<keyword id="KW-0677">Repeat</keyword>
<keyword id="KW-0862">Zinc</keyword>
<keyword id="KW-0863">Zinc-finger</keyword>
<evidence type="ECO:0000255" key="1"/>
<evidence type="ECO:0000255" key="2">
    <source>
        <dbReference type="PROSITE-ProRule" id="PRU00723"/>
    </source>
</evidence>
<evidence type="ECO:0000256" key="3">
    <source>
        <dbReference type="SAM" id="MobiDB-lite"/>
    </source>
</evidence>
<reference key="1">
    <citation type="journal article" date="1999" name="Nature">
        <title>Sequence and analysis of chromosome 2 of the plant Arabidopsis thaliana.</title>
        <authorList>
            <person name="Lin X."/>
            <person name="Kaul S."/>
            <person name="Rounsley S.D."/>
            <person name="Shea T.P."/>
            <person name="Benito M.-I."/>
            <person name="Town C.D."/>
            <person name="Fujii C.Y."/>
            <person name="Mason T.M."/>
            <person name="Bowman C.L."/>
            <person name="Barnstead M.E."/>
            <person name="Feldblyum T.V."/>
            <person name="Buell C.R."/>
            <person name="Ketchum K.A."/>
            <person name="Lee J.J."/>
            <person name="Ronning C.M."/>
            <person name="Koo H.L."/>
            <person name="Moffat K.S."/>
            <person name="Cronin L.A."/>
            <person name="Shen M."/>
            <person name="Pai G."/>
            <person name="Van Aken S."/>
            <person name="Umayam L."/>
            <person name="Tallon L.J."/>
            <person name="Gill J.E."/>
            <person name="Adams M.D."/>
            <person name="Carrera A.J."/>
            <person name="Creasy T.H."/>
            <person name="Goodman H.M."/>
            <person name="Somerville C.R."/>
            <person name="Copenhaver G.P."/>
            <person name="Preuss D."/>
            <person name="Nierman W.C."/>
            <person name="White O."/>
            <person name="Eisen J.A."/>
            <person name="Salzberg S.L."/>
            <person name="Fraser C.M."/>
            <person name="Venter J.C."/>
        </authorList>
    </citation>
    <scope>NUCLEOTIDE SEQUENCE [LARGE SCALE GENOMIC DNA]</scope>
    <source>
        <strain>cv. Columbia</strain>
    </source>
</reference>
<reference key="2">
    <citation type="journal article" date="2017" name="Plant J.">
        <title>Araport11: a complete reannotation of the Arabidopsis thaliana reference genome.</title>
        <authorList>
            <person name="Cheng C.Y."/>
            <person name="Krishnakumar V."/>
            <person name="Chan A.P."/>
            <person name="Thibaud-Nissen F."/>
            <person name="Schobel S."/>
            <person name="Town C.D."/>
        </authorList>
    </citation>
    <scope>GENOME REANNOTATION</scope>
    <source>
        <strain>cv. Columbia</strain>
    </source>
</reference>
<reference key="3">
    <citation type="journal article" date="2008" name="BMC Genomics">
        <title>Genome-wide analysis of CCCH zinc finger family in Arabidopsis and rice.</title>
        <authorList>
            <person name="Wang D."/>
            <person name="Guo Y."/>
            <person name="Wu C."/>
            <person name="Yang G."/>
            <person name="Li Y."/>
            <person name="Zheng C."/>
        </authorList>
    </citation>
    <scope>NOMENCLATURE</scope>
</reference>